<sequence length="414" mass="46981">MPWVGSAVVYGMQPYEFFENCRKQHGDVFSFLLLGKVMTVYLGPKGHEFVLNAKLSDVSAEDAYTHLTTPVFGKGVIYDCPNWKLMEQKKFAKVALTKESFIRYVPLIKDEMLKYFNANFRGDSGKTDVLKSQSEMTLFTASRSLFGDALRNRLDASYAEMYSDLDKGFTPLNFVFSYLPLPNYWKRDAAHKNISNTYLDLINTKRAGGEIKNEDLVDALLKNSVYKDGTRMTDEELAHLMIGVLMGGQHTSSATSAWFLLHLGEKPQLQEEIYREIQSVLGENFERELTYDDLQKLDLVNATIKETLRLHMPLHSIFRKVTRDLPVPNTSYIVPKGHYVLISPGYTMLSERYFPNASEFQPHRWDEIKSIDGGISFGAEGENAKETVDYGFGKISKGVASPYLPFGGGRHRCT</sequence>
<dbReference type="EC" id="1.14.14.154"/>
<dbReference type="EMBL" id="S75391">
    <property type="protein sequence ID" value="AAB32680.1"/>
    <property type="molecule type" value="Genomic_DNA"/>
</dbReference>
<dbReference type="SMR" id="Q02315"/>
<dbReference type="VEuPathDB" id="FungiDB:C5L36_0D02200"/>
<dbReference type="eggNOG" id="KOG0684">
    <property type="taxonomic scope" value="Eukaryota"/>
</dbReference>
<dbReference type="UniPathway" id="UPA00770">
    <property type="reaction ID" value="UER00754"/>
</dbReference>
<dbReference type="GO" id="GO:0016020">
    <property type="term" value="C:membrane"/>
    <property type="evidence" value="ECO:0007669"/>
    <property type="project" value="UniProtKB-SubCell"/>
</dbReference>
<dbReference type="GO" id="GO:0020037">
    <property type="term" value="F:heme binding"/>
    <property type="evidence" value="ECO:0007669"/>
    <property type="project" value="InterPro"/>
</dbReference>
<dbReference type="GO" id="GO:0005506">
    <property type="term" value="F:iron ion binding"/>
    <property type="evidence" value="ECO:0007669"/>
    <property type="project" value="InterPro"/>
</dbReference>
<dbReference type="GO" id="GO:0008398">
    <property type="term" value="F:sterol 14-demethylase activity"/>
    <property type="evidence" value="ECO:0007669"/>
    <property type="project" value="UniProtKB-EC"/>
</dbReference>
<dbReference type="GO" id="GO:0016126">
    <property type="term" value="P:sterol biosynthetic process"/>
    <property type="evidence" value="ECO:0007669"/>
    <property type="project" value="UniProtKB-KW"/>
</dbReference>
<dbReference type="CDD" id="cd11042">
    <property type="entry name" value="CYP51-like"/>
    <property type="match status" value="1"/>
</dbReference>
<dbReference type="Gene3D" id="1.10.630.10">
    <property type="entry name" value="Cytochrome P450"/>
    <property type="match status" value="1"/>
</dbReference>
<dbReference type="InterPro" id="IPR050529">
    <property type="entry name" value="CYP450_sterol_14alpha_dmase"/>
</dbReference>
<dbReference type="InterPro" id="IPR001128">
    <property type="entry name" value="Cyt_P450"/>
</dbReference>
<dbReference type="InterPro" id="IPR002403">
    <property type="entry name" value="Cyt_P450_E_grp-IV"/>
</dbReference>
<dbReference type="InterPro" id="IPR036396">
    <property type="entry name" value="Cyt_P450_sf"/>
</dbReference>
<dbReference type="PANTHER" id="PTHR24304:SF2">
    <property type="entry name" value="24-HYDROXYCHOLESTEROL 7-ALPHA-HYDROXYLASE"/>
    <property type="match status" value="1"/>
</dbReference>
<dbReference type="PANTHER" id="PTHR24304">
    <property type="entry name" value="CYTOCHROME P450 FAMILY 7"/>
    <property type="match status" value="1"/>
</dbReference>
<dbReference type="Pfam" id="PF00067">
    <property type="entry name" value="p450"/>
    <property type="match status" value="1"/>
</dbReference>
<dbReference type="PRINTS" id="PR00465">
    <property type="entry name" value="EP450IV"/>
</dbReference>
<dbReference type="PRINTS" id="PR00385">
    <property type="entry name" value="P450"/>
</dbReference>
<dbReference type="SUPFAM" id="SSF48264">
    <property type="entry name" value="Cytochrome P450"/>
    <property type="match status" value="1"/>
</dbReference>
<evidence type="ECO:0000250" key="1"/>
<evidence type="ECO:0000250" key="2">
    <source>
        <dbReference type="UniProtKB" id="P10613"/>
    </source>
</evidence>
<evidence type="ECO:0000250" key="3">
    <source>
        <dbReference type="UniProtKB" id="P10614"/>
    </source>
</evidence>
<evidence type="ECO:0000250" key="4">
    <source>
        <dbReference type="UniProtKB" id="Q4WNT5"/>
    </source>
</evidence>
<evidence type="ECO:0000305" key="5"/>
<comment type="function">
    <text evidence="2 3 4">Sterol 14alpha-demethylase that plays a critical role in the third module of ergosterol biosynthesis pathway, being ergosterol the major sterol component in fungal membranes that participates in a variety of functions (By similarity). The third module or late pathway involves the ergosterol synthesis itself through consecutive reactions that mainly occur in the endoplasmic reticulum (ER) membrane (By similarity). In filamentous fungi, during the initial step of this module, lanosterol (lanosta-8,24-dien-3beta-ol) can be metabolized to eburicol (By similarity). Sterol 14alpha-demethylase catalyzes the three-step oxidative removal of the 14alpha-methyl group (C-32) of both these sterols in the form of formate, and converts eburicol and lanosterol to 14-demethyleburicol (4,4,24-trimethylergosta-8,14,24(28)-trienol) and 4,4-dimethyl-5alpha-cholesta-8,14,24-trien-3beta-ol, respectively, which are further metabolized by other enzymes in the pathway to ergosterol (By similarity). Can also use substrates not intrinsic to fungi, such as 24,25-dihydrolanosterol (DHL), producing 4,4-dimethyl-8,14-cholestadien-3-beta-ol, but at lower rates than the endogenous substrates (By similarity).</text>
</comment>
<comment type="catalytic activity">
    <reaction evidence="3">
        <text>a 14alpha-methyl steroid + 3 reduced [NADPH--hemoprotein reductase] + 3 O2 = a Delta(14) steroid + formate + 3 oxidized [NADPH--hemoprotein reductase] + 4 H2O + 4 H(+)</text>
        <dbReference type="Rhea" id="RHEA:54028"/>
        <dbReference type="Rhea" id="RHEA-COMP:11964"/>
        <dbReference type="Rhea" id="RHEA-COMP:11965"/>
        <dbReference type="ChEBI" id="CHEBI:15377"/>
        <dbReference type="ChEBI" id="CHEBI:15378"/>
        <dbReference type="ChEBI" id="CHEBI:15379"/>
        <dbReference type="ChEBI" id="CHEBI:15740"/>
        <dbReference type="ChEBI" id="CHEBI:57618"/>
        <dbReference type="ChEBI" id="CHEBI:58210"/>
        <dbReference type="ChEBI" id="CHEBI:138029"/>
        <dbReference type="ChEBI" id="CHEBI:138031"/>
        <dbReference type="EC" id="1.14.14.154"/>
    </reaction>
    <physiologicalReaction direction="left-to-right" evidence="3">
        <dbReference type="Rhea" id="RHEA:54029"/>
    </physiologicalReaction>
</comment>
<comment type="catalytic activity">
    <reaction evidence="3">
        <text>a 14alpha-methyl steroid + reduced [NADPH--hemoprotein reductase] + O2 = a 14alpha-hydroxymethyl steroid + oxidized [NADPH--hemoprotein reductase] + H2O + H(+)</text>
        <dbReference type="Rhea" id="RHEA:68060"/>
        <dbReference type="Rhea" id="RHEA-COMP:11964"/>
        <dbReference type="Rhea" id="RHEA-COMP:11965"/>
        <dbReference type="ChEBI" id="CHEBI:15377"/>
        <dbReference type="ChEBI" id="CHEBI:15378"/>
        <dbReference type="ChEBI" id="CHEBI:15379"/>
        <dbReference type="ChEBI" id="CHEBI:57618"/>
        <dbReference type="ChEBI" id="CHEBI:58210"/>
        <dbReference type="ChEBI" id="CHEBI:138029"/>
        <dbReference type="ChEBI" id="CHEBI:176901"/>
    </reaction>
    <physiologicalReaction direction="left-to-right" evidence="3">
        <dbReference type="Rhea" id="RHEA:68061"/>
    </physiologicalReaction>
</comment>
<comment type="catalytic activity">
    <reaction evidence="3">
        <text>a 14alpha-hydroxymethyl steroid + reduced [NADPH--hemoprotein reductase] + O2 = a 14alpha-formyl steroid + oxidized [NADPH--hemoprotein reductase] + 2 H2O + H(+)</text>
        <dbReference type="Rhea" id="RHEA:68064"/>
        <dbReference type="Rhea" id="RHEA-COMP:11964"/>
        <dbReference type="Rhea" id="RHEA-COMP:11965"/>
        <dbReference type="ChEBI" id="CHEBI:15377"/>
        <dbReference type="ChEBI" id="CHEBI:15378"/>
        <dbReference type="ChEBI" id="CHEBI:15379"/>
        <dbReference type="ChEBI" id="CHEBI:57618"/>
        <dbReference type="ChEBI" id="CHEBI:58210"/>
        <dbReference type="ChEBI" id="CHEBI:176901"/>
        <dbReference type="ChEBI" id="CHEBI:176902"/>
    </reaction>
    <physiologicalReaction direction="left-to-right" evidence="3">
        <dbReference type="Rhea" id="RHEA:68065"/>
    </physiologicalReaction>
</comment>
<comment type="catalytic activity">
    <reaction evidence="3">
        <text>a 14alpha-formyl steroid + reduced [NADPH--hemoprotein reductase] + O2 = a Delta(14) steroid + formate + oxidized [NADPH--hemoprotein reductase] + H2O + 2 H(+)</text>
        <dbReference type="Rhea" id="RHEA:68068"/>
        <dbReference type="Rhea" id="RHEA-COMP:11964"/>
        <dbReference type="Rhea" id="RHEA-COMP:11965"/>
        <dbReference type="ChEBI" id="CHEBI:15377"/>
        <dbReference type="ChEBI" id="CHEBI:15378"/>
        <dbReference type="ChEBI" id="CHEBI:15379"/>
        <dbReference type="ChEBI" id="CHEBI:15740"/>
        <dbReference type="ChEBI" id="CHEBI:57618"/>
        <dbReference type="ChEBI" id="CHEBI:58210"/>
        <dbReference type="ChEBI" id="CHEBI:138031"/>
        <dbReference type="ChEBI" id="CHEBI:176902"/>
    </reaction>
    <physiologicalReaction direction="left-to-right" evidence="3">
        <dbReference type="Rhea" id="RHEA:68069"/>
    </physiologicalReaction>
</comment>
<comment type="catalytic activity">
    <reaction evidence="3">
        <text>lanosterol + 3 reduced [NADPH--hemoprotein reductase] + 3 O2 = 4,4-dimethyl-5alpha-cholesta-8,14,24-trien-3beta-ol + formate + 3 oxidized [NADPH--hemoprotein reductase] + 4 H2O + 4 H(+)</text>
        <dbReference type="Rhea" id="RHEA:25286"/>
        <dbReference type="Rhea" id="RHEA-COMP:11964"/>
        <dbReference type="Rhea" id="RHEA-COMP:11965"/>
        <dbReference type="ChEBI" id="CHEBI:15377"/>
        <dbReference type="ChEBI" id="CHEBI:15378"/>
        <dbReference type="ChEBI" id="CHEBI:15379"/>
        <dbReference type="ChEBI" id="CHEBI:15740"/>
        <dbReference type="ChEBI" id="CHEBI:16521"/>
        <dbReference type="ChEBI" id="CHEBI:17813"/>
        <dbReference type="ChEBI" id="CHEBI:57618"/>
        <dbReference type="ChEBI" id="CHEBI:58210"/>
        <dbReference type="EC" id="1.14.14.154"/>
    </reaction>
    <physiologicalReaction direction="left-to-right" evidence="3">
        <dbReference type="Rhea" id="RHEA:25287"/>
    </physiologicalReaction>
</comment>
<comment type="catalytic activity">
    <reaction evidence="3">
        <text>lanosterol + reduced [NADPH--hemoprotein reductase] + O2 = 32-hydroxylanosterol + oxidized [NADPH--hemoprotein reductase] + H2O + H(+)</text>
        <dbReference type="Rhea" id="RHEA:75103"/>
        <dbReference type="Rhea" id="RHEA-COMP:11964"/>
        <dbReference type="Rhea" id="RHEA-COMP:11965"/>
        <dbReference type="ChEBI" id="CHEBI:15377"/>
        <dbReference type="ChEBI" id="CHEBI:15378"/>
        <dbReference type="ChEBI" id="CHEBI:15379"/>
        <dbReference type="ChEBI" id="CHEBI:16521"/>
        <dbReference type="ChEBI" id="CHEBI:57618"/>
        <dbReference type="ChEBI" id="CHEBI:58210"/>
        <dbReference type="ChEBI" id="CHEBI:166806"/>
    </reaction>
    <physiologicalReaction direction="left-to-right" evidence="3">
        <dbReference type="Rhea" id="RHEA:75104"/>
    </physiologicalReaction>
</comment>
<comment type="catalytic activity">
    <reaction evidence="3">
        <text>32-hydroxylanosterol + reduced [NADPH--hemoprotein reductase] + O2 = 32-oxolanosterol + oxidized [NADPH--hemoprotein reductase] + 2 H2O + H(+)</text>
        <dbReference type="Rhea" id="RHEA:75107"/>
        <dbReference type="Rhea" id="RHEA-COMP:11964"/>
        <dbReference type="Rhea" id="RHEA-COMP:11965"/>
        <dbReference type="ChEBI" id="CHEBI:15377"/>
        <dbReference type="ChEBI" id="CHEBI:15378"/>
        <dbReference type="ChEBI" id="CHEBI:15379"/>
        <dbReference type="ChEBI" id="CHEBI:57618"/>
        <dbReference type="ChEBI" id="CHEBI:58210"/>
        <dbReference type="ChEBI" id="CHEBI:166681"/>
        <dbReference type="ChEBI" id="CHEBI:166806"/>
    </reaction>
    <physiologicalReaction direction="left-to-right" evidence="3">
        <dbReference type="Rhea" id="RHEA:75108"/>
    </physiologicalReaction>
</comment>
<comment type="catalytic activity">
    <reaction evidence="3">
        <text>32-oxolanosterol + reduced [NADPH--hemoprotein reductase] + O2 = 4,4-dimethyl-5alpha-cholesta-8,14,24-trien-3beta-ol + formate + oxidized [NADPH--hemoprotein reductase] + H2O + 2 H(+)</text>
        <dbReference type="Rhea" id="RHEA:75111"/>
        <dbReference type="Rhea" id="RHEA-COMP:11964"/>
        <dbReference type="Rhea" id="RHEA-COMP:11965"/>
        <dbReference type="ChEBI" id="CHEBI:15377"/>
        <dbReference type="ChEBI" id="CHEBI:15378"/>
        <dbReference type="ChEBI" id="CHEBI:15379"/>
        <dbReference type="ChEBI" id="CHEBI:15740"/>
        <dbReference type="ChEBI" id="CHEBI:17813"/>
        <dbReference type="ChEBI" id="CHEBI:57618"/>
        <dbReference type="ChEBI" id="CHEBI:58210"/>
        <dbReference type="ChEBI" id="CHEBI:166681"/>
    </reaction>
    <physiologicalReaction direction="left-to-right" evidence="3">
        <dbReference type="Rhea" id="RHEA:75112"/>
    </physiologicalReaction>
</comment>
<comment type="catalytic activity">
    <reaction evidence="2">
        <text>eburicol + 3 reduced [NADPH--hemoprotein reductase] + 3 O2 = 14-demethyleburicol + formate + 3 oxidized [NADPH--hemoprotein reductase] + 4 H2O + 4 H(+)</text>
        <dbReference type="Rhea" id="RHEA:75439"/>
        <dbReference type="Rhea" id="RHEA-COMP:11964"/>
        <dbReference type="Rhea" id="RHEA-COMP:11965"/>
        <dbReference type="ChEBI" id="CHEBI:15377"/>
        <dbReference type="ChEBI" id="CHEBI:15378"/>
        <dbReference type="ChEBI" id="CHEBI:15379"/>
        <dbReference type="ChEBI" id="CHEBI:15740"/>
        <dbReference type="ChEBI" id="CHEBI:57618"/>
        <dbReference type="ChEBI" id="CHEBI:58210"/>
        <dbReference type="ChEBI" id="CHEBI:70315"/>
        <dbReference type="ChEBI" id="CHEBI:194330"/>
    </reaction>
    <physiologicalReaction direction="left-to-right" evidence="2">
        <dbReference type="Rhea" id="RHEA:75440"/>
    </physiologicalReaction>
</comment>
<comment type="catalytic activity">
    <reaction evidence="3">
        <text>eburicol + reduced [NADPH--hemoprotein reductase] + O2 = 32-hydroxyeburicol + oxidized [NADPH--hemoprotein reductase] + H2O + H(+)</text>
        <dbReference type="Rhea" id="RHEA:75427"/>
        <dbReference type="Rhea" id="RHEA-COMP:11964"/>
        <dbReference type="Rhea" id="RHEA-COMP:11965"/>
        <dbReference type="ChEBI" id="CHEBI:15377"/>
        <dbReference type="ChEBI" id="CHEBI:15378"/>
        <dbReference type="ChEBI" id="CHEBI:15379"/>
        <dbReference type="ChEBI" id="CHEBI:57618"/>
        <dbReference type="ChEBI" id="CHEBI:58210"/>
        <dbReference type="ChEBI" id="CHEBI:70315"/>
        <dbReference type="ChEBI" id="CHEBI:194328"/>
    </reaction>
    <physiologicalReaction direction="left-to-right" evidence="3">
        <dbReference type="Rhea" id="RHEA:75428"/>
    </physiologicalReaction>
</comment>
<comment type="catalytic activity">
    <reaction evidence="3">
        <text>32-hydroxyeburicol + reduced [NADPH--hemoprotein reductase] + O2 = 32-oxoeburicol + oxidized [NADPH--hemoprotein reductase] + 2 H2O + H(+)</text>
        <dbReference type="Rhea" id="RHEA:75431"/>
        <dbReference type="Rhea" id="RHEA-COMP:11964"/>
        <dbReference type="Rhea" id="RHEA-COMP:11965"/>
        <dbReference type="ChEBI" id="CHEBI:15377"/>
        <dbReference type="ChEBI" id="CHEBI:15378"/>
        <dbReference type="ChEBI" id="CHEBI:15379"/>
        <dbReference type="ChEBI" id="CHEBI:57618"/>
        <dbReference type="ChEBI" id="CHEBI:58210"/>
        <dbReference type="ChEBI" id="CHEBI:194328"/>
        <dbReference type="ChEBI" id="CHEBI:194329"/>
    </reaction>
    <physiologicalReaction direction="left-to-right" evidence="3">
        <dbReference type="Rhea" id="RHEA:75432"/>
    </physiologicalReaction>
</comment>
<comment type="catalytic activity">
    <reaction evidence="3">
        <text>32-oxoeburicol + reduced [NADPH--hemoprotein reductase] + O2 = 14-demethyleburicol + formate + oxidized [NADPH--hemoprotein reductase] + H2O + 2 H(+)</text>
        <dbReference type="Rhea" id="RHEA:75435"/>
        <dbReference type="Rhea" id="RHEA-COMP:11964"/>
        <dbReference type="Rhea" id="RHEA-COMP:11965"/>
        <dbReference type="ChEBI" id="CHEBI:15377"/>
        <dbReference type="ChEBI" id="CHEBI:15378"/>
        <dbReference type="ChEBI" id="CHEBI:15379"/>
        <dbReference type="ChEBI" id="CHEBI:15740"/>
        <dbReference type="ChEBI" id="CHEBI:57618"/>
        <dbReference type="ChEBI" id="CHEBI:58210"/>
        <dbReference type="ChEBI" id="CHEBI:194329"/>
        <dbReference type="ChEBI" id="CHEBI:194330"/>
    </reaction>
    <physiologicalReaction direction="left-to-right" evidence="3">
        <dbReference type="Rhea" id="RHEA:75436"/>
    </physiologicalReaction>
</comment>
<comment type="cofactor">
    <cofactor evidence="1">
        <name>heme</name>
        <dbReference type="ChEBI" id="CHEBI:30413"/>
    </cofactor>
</comment>
<comment type="pathway">
    <text>Steroid biosynthesis; zymosterol biosynthesis; zymosterol from lanosterol: step 1/6.</text>
</comment>
<comment type="subcellular location">
    <subcellularLocation>
        <location evidence="5">Membrane</location>
    </subcellularLocation>
</comment>
<comment type="similarity">
    <text evidence="5">Belongs to the cytochrome P450 family.</text>
</comment>
<feature type="chain" id="PRO_0000052007" description="Lanosterol 14-alpha demethylase">
    <location>
        <begin position="1"/>
        <end position="414" status="greater than"/>
    </location>
</feature>
<feature type="non-terminal residue">
    <location>
        <position position="414"/>
    </location>
</feature>
<reference key="1">
    <citation type="journal article" date="1994" name="J. Clin. Microbiol.">
        <title>Rapid detection and identification of Candida albicans and Torulopsis (Candida) glabrata in clinical specimens by species-specific nested PCR amplification of a cytochrome P-450 lanosterol-alpha-demethylase (L1A1) gene fragment.</title>
        <authorList>
            <person name="Burgener-Kairuz P."/>
            <person name="Zuber J.P."/>
            <person name="Jaunin P."/>
            <person name="Buchman T.G."/>
            <person name="Bille J."/>
            <person name="Rossier M."/>
        </authorList>
    </citation>
    <scope>NUCLEOTIDE SEQUENCE [GENOMIC DNA]</scope>
    <source>
        <strain>ATCC 6258 / CBS 573 / DSM 6128 / JCM 1609 / NBRC 1064 / NRRL Y-413</strain>
    </source>
</reference>
<protein>
    <recommendedName>
        <fullName>Lanosterol 14-alpha demethylase</fullName>
        <ecNumber>1.14.14.154</ecNumber>
    </recommendedName>
    <alternativeName>
        <fullName>CYPLI</fullName>
    </alternativeName>
    <alternativeName>
        <fullName>Cytochrome P450 51</fullName>
    </alternativeName>
    <alternativeName>
        <fullName>Cytochrome P450-14DM</fullName>
    </alternativeName>
    <alternativeName>
        <fullName>Cytochrome P450-LIA1</fullName>
    </alternativeName>
    <alternativeName>
        <fullName>Sterol 14-alpha demethylase</fullName>
    </alternativeName>
</protein>
<gene>
    <name type="primary">CYP51</name>
</gene>
<proteinExistence type="inferred from homology"/>
<keyword id="KW-0349">Heme</keyword>
<keyword id="KW-0408">Iron</keyword>
<keyword id="KW-0444">Lipid biosynthesis</keyword>
<keyword id="KW-0443">Lipid metabolism</keyword>
<keyword id="KW-0472">Membrane</keyword>
<keyword id="KW-0479">Metal-binding</keyword>
<keyword id="KW-0503">Monooxygenase</keyword>
<keyword id="KW-0560">Oxidoreductase</keyword>
<keyword id="KW-0752">Steroid biosynthesis</keyword>
<keyword id="KW-0753">Steroid metabolism</keyword>
<keyword id="KW-0756">Sterol biosynthesis</keyword>
<keyword id="KW-1207">Sterol metabolism</keyword>
<accession>Q02315</accession>
<name>CP51_PICKU</name>
<organism>
    <name type="scientific">Pichia kudriavzevii</name>
    <name type="common">Yeast</name>
    <name type="synonym">Issatchenkia orientalis</name>
    <dbReference type="NCBI Taxonomy" id="4909"/>
    <lineage>
        <taxon>Eukaryota</taxon>
        <taxon>Fungi</taxon>
        <taxon>Dikarya</taxon>
        <taxon>Ascomycota</taxon>
        <taxon>Saccharomycotina</taxon>
        <taxon>Pichiomycetes</taxon>
        <taxon>Pichiales</taxon>
        <taxon>Pichiaceae</taxon>
        <taxon>Pichia</taxon>
    </lineage>
</organism>